<feature type="chain" id="PRO_0000211654" description="Tat proofreading chaperone DmsD">
    <location>
        <begin position="1"/>
        <end position="204"/>
    </location>
</feature>
<feature type="helix" evidence="3">
    <location>
        <begin position="1"/>
        <end position="5"/>
    </location>
</feature>
<feature type="turn" evidence="3">
    <location>
        <begin position="6"/>
        <end position="8"/>
    </location>
</feature>
<feature type="helix" evidence="3">
    <location>
        <begin position="9"/>
        <end position="22"/>
    </location>
</feature>
<feature type="turn" evidence="3">
    <location>
        <begin position="28"/>
        <end position="30"/>
    </location>
</feature>
<feature type="helix" evidence="3">
    <location>
        <begin position="31"/>
        <end position="39"/>
    </location>
</feature>
<feature type="helix" evidence="3">
    <location>
        <begin position="43"/>
        <end position="45"/>
    </location>
</feature>
<feature type="strand" evidence="3">
    <location>
        <begin position="46"/>
        <end position="48"/>
    </location>
</feature>
<feature type="helix" evidence="3">
    <location>
        <begin position="50"/>
        <end position="60"/>
    </location>
</feature>
<feature type="helix" evidence="3">
    <location>
        <begin position="68"/>
        <end position="76"/>
    </location>
</feature>
<feature type="helix" evidence="3">
    <location>
        <begin position="88"/>
        <end position="92"/>
    </location>
</feature>
<feature type="helix" evidence="3">
    <location>
        <begin position="101"/>
        <end position="112"/>
    </location>
</feature>
<feature type="helix" evidence="3">
    <location>
        <begin position="128"/>
        <end position="140"/>
    </location>
</feature>
<feature type="helix" evidence="3">
    <location>
        <begin position="144"/>
        <end position="154"/>
    </location>
</feature>
<feature type="helix" evidence="3">
    <location>
        <begin position="156"/>
        <end position="169"/>
    </location>
</feature>
<feature type="helix" evidence="3">
    <location>
        <begin position="173"/>
        <end position="192"/>
    </location>
</feature>
<protein>
    <recommendedName>
        <fullName evidence="1">Tat proofreading chaperone DmsD</fullName>
    </recommendedName>
    <alternativeName>
        <fullName evidence="1">DMSO reductase maturation protein</fullName>
    </alternativeName>
    <alternativeName>
        <fullName evidence="1">Twin-arginine leader-binding protein DmsD</fullName>
    </alternativeName>
</protein>
<comment type="function">
    <text evidence="1">Required for biogenesis/assembly of DMSO reductase, but not for the interaction of the DmsA signal peptide with the Tat system. May be part of a chaperone cascade complex that facilitates a folding-maturation pathway for the substrate protein.</text>
</comment>
<comment type="subunit">
    <text evidence="2">Monomer in solution.</text>
</comment>
<comment type="similarity">
    <text evidence="1">Belongs to the TorD/DmsD family. DmsD subfamily.</text>
</comment>
<reference key="1">
    <citation type="journal article" date="2001" name="Nature">
        <title>Complete genome sequence of Salmonella enterica serovar Typhimurium LT2.</title>
        <authorList>
            <person name="McClelland M."/>
            <person name="Sanderson K.E."/>
            <person name="Spieth J."/>
            <person name="Clifton S.W."/>
            <person name="Latreille P."/>
            <person name="Courtney L."/>
            <person name="Porwollik S."/>
            <person name="Ali J."/>
            <person name="Dante M."/>
            <person name="Du F."/>
            <person name="Hou S."/>
            <person name="Layman D."/>
            <person name="Leonard S."/>
            <person name="Nguyen C."/>
            <person name="Scott K."/>
            <person name="Holmes A."/>
            <person name="Grewal N."/>
            <person name="Mulvaney E."/>
            <person name="Ryan E."/>
            <person name="Sun H."/>
            <person name="Florea L."/>
            <person name="Miller W."/>
            <person name="Stoneking T."/>
            <person name="Nhan M."/>
            <person name="Waterston R."/>
            <person name="Wilson R.K."/>
        </authorList>
    </citation>
    <scope>NUCLEOTIDE SEQUENCE [LARGE SCALE GENOMIC DNA]</scope>
    <source>
        <strain>LT2 / SGSC1412 / ATCC 700720</strain>
    </source>
</reference>
<reference key="2">
    <citation type="journal article" date="2008" name="Proteins">
        <title>The 1.38 A crystal structure of DmsD protein from Salmonella typhimurium, a proofreading chaperone on the Tat pathway.</title>
        <authorList>
            <person name="Qiu Y."/>
            <person name="Zhang R."/>
            <person name="Binkowski T.A."/>
            <person name="Tereshko V."/>
            <person name="Joachimiak A."/>
            <person name="Kossiakoff A."/>
        </authorList>
    </citation>
    <scope>X-RAY CRYSTALLOGRAPHY (1.38 ANGSTROMS)</scope>
    <scope>SUBUNIT</scope>
</reference>
<name>DMSD_SALTY</name>
<sequence length="204" mass="23481">MTTFLQRDDFAVTARVLGALFYYSPESHETAPLVQALLNDDWQAQWPLDAEALAPVAAMFKTHSEESLPQAWQRLFIGPYALPSPPWGSVWLDRESVLFGDSTLALRQWMRENGIQFEMQQNEPEDHFGSLLLLAAWLAENDRHHECEQLLAWHLFPWSSRFLDVFIDHAGHPFYQALGQLARLTLAQWQAQLIIPVAVKPLFR</sequence>
<dbReference type="EMBL" id="AE006468">
    <property type="protein sequence ID" value="AAL20414.1"/>
    <property type="molecule type" value="Genomic_DNA"/>
</dbReference>
<dbReference type="RefSeq" id="WP_000206561.1">
    <property type="nucleotide sequence ID" value="NC_003197.2"/>
</dbReference>
<dbReference type="PDB" id="1S9U">
    <property type="method" value="X-ray"/>
    <property type="resolution" value="1.38 A"/>
    <property type="chains" value="A=1-204"/>
</dbReference>
<dbReference type="PDBsum" id="1S9U"/>
<dbReference type="SMR" id="Q8ZPK0"/>
<dbReference type="STRING" id="99287.STM1495"/>
<dbReference type="PaxDb" id="99287-STM1495"/>
<dbReference type="KEGG" id="stm:STM1495"/>
<dbReference type="PATRIC" id="fig|99287.12.peg.1580"/>
<dbReference type="HOGENOM" id="CLU_077650_7_1_6"/>
<dbReference type="OMA" id="AWHLLPW"/>
<dbReference type="PhylomeDB" id="Q8ZPK0"/>
<dbReference type="BioCyc" id="SENT99287:STM1495-MONOMER"/>
<dbReference type="EvolutionaryTrace" id="Q8ZPK0"/>
<dbReference type="Proteomes" id="UP000001014">
    <property type="component" value="Chromosome"/>
</dbReference>
<dbReference type="GO" id="GO:0005737">
    <property type="term" value="C:cytoplasm"/>
    <property type="evidence" value="ECO:0000318"/>
    <property type="project" value="GO_Central"/>
</dbReference>
<dbReference type="GO" id="GO:0005048">
    <property type="term" value="F:signal sequence binding"/>
    <property type="evidence" value="ECO:0007669"/>
    <property type="project" value="InterPro"/>
</dbReference>
<dbReference type="GO" id="GO:0061077">
    <property type="term" value="P:chaperone-mediated protein folding"/>
    <property type="evidence" value="ECO:0007669"/>
    <property type="project" value="UniProtKB-UniRule"/>
</dbReference>
<dbReference type="GO" id="GO:0051604">
    <property type="term" value="P:protein maturation"/>
    <property type="evidence" value="ECO:0000318"/>
    <property type="project" value="GO_Central"/>
</dbReference>
<dbReference type="Gene3D" id="1.10.3480.10">
    <property type="entry name" value="TorD-like"/>
    <property type="match status" value="1"/>
</dbReference>
<dbReference type="HAMAP" id="MF_00940">
    <property type="entry name" value="DmsD_chaperone"/>
    <property type="match status" value="1"/>
</dbReference>
<dbReference type="InterPro" id="IPR026269">
    <property type="entry name" value="DmsD-type"/>
</dbReference>
<dbReference type="InterPro" id="IPR028611">
    <property type="entry name" value="DmsD_chaperone"/>
</dbReference>
<dbReference type="InterPro" id="IPR020945">
    <property type="entry name" value="DMSO/NO3_reduct_chaperone"/>
</dbReference>
<dbReference type="InterPro" id="IPR036411">
    <property type="entry name" value="TorD-like_sf"/>
</dbReference>
<dbReference type="InterPro" id="IPR050289">
    <property type="entry name" value="TorD/DmsD_chaperones"/>
</dbReference>
<dbReference type="NCBIfam" id="NF008632">
    <property type="entry name" value="PRK11621.1"/>
    <property type="match status" value="1"/>
</dbReference>
<dbReference type="PANTHER" id="PTHR34227">
    <property type="entry name" value="CHAPERONE PROTEIN YCDY"/>
    <property type="match status" value="1"/>
</dbReference>
<dbReference type="PANTHER" id="PTHR34227:SF6">
    <property type="entry name" value="TAT PROOFREADING CHAPERONE DMSD"/>
    <property type="match status" value="1"/>
</dbReference>
<dbReference type="Pfam" id="PF02613">
    <property type="entry name" value="Nitrate_red_del"/>
    <property type="match status" value="1"/>
</dbReference>
<dbReference type="PIRSF" id="PIRSF004690">
    <property type="entry name" value="DmsD"/>
    <property type="match status" value="1"/>
</dbReference>
<dbReference type="SUPFAM" id="SSF89155">
    <property type="entry name" value="TorD-like"/>
    <property type="match status" value="1"/>
</dbReference>
<organism>
    <name type="scientific">Salmonella typhimurium (strain LT2 / SGSC1412 / ATCC 700720)</name>
    <dbReference type="NCBI Taxonomy" id="99287"/>
    <lineage>
        <taxon>Bacteria</taxon>
        <taxon>Pseudomonadati</taxon>
        <taxon>Pseudomonadota</taxon>
        <taxon>Gammaproteobacteria</taxon>
        <taxon>Enterobacterales</taxon>
        <taxon>Enterobacteriaceae</taxon>
        <taxon>Salmonella</taxon>
    </lineage>
</organism>
<accession>Q8ZPK0</accession>
<evidence type="ECO:0000255" key="1">
    <source>
        <dbReference type="HAMAP-Rule" id="MF_00940"/>
    </source>
</evidence>
<evidence type="ECO:0000269" key="2">
    <source>
    </source>
</evidence>
<evidence type="ECO:0007829" key="3">
    <source>
        <dbReference type="PDB" id="1S9U"/>
    </source>
</evidence>
<keyword id="KW-0002">3D-structure</keyword>
<keyword id="KW-0143">Chaperone</keyword>
<keyword id="KW-1185">Reference proteome</keyword>
<proteinExistence type="evidence at protein level"/>
<gene>
    <name evidence="1" type="primary">dmsD</name>
    <name type="ordered locus">STM1495</name>
</gene>